<reference key="1">
    <citation type="journal article" date="1997" name="Science">
        <title>The complete genome sequence of Escherichia coli K-12.</title>
        <authorList>
            <person name="Blattner F.R."/>
            <person name="Plunkett G. III"/>
            <person name="Bloch C.A."/>
            <person name="Perna N.T."/>
            <person name="Burland V."/>
            <person name="Riley M."/>
            <person name="Collado-Vides J."/>
            <person name="Glasner J.D."/>
            <person name="Rode C.K."/>
            <person name="Mayhew G.F."/>
            <person name="Gregor J."/>
            <person name="Davis N.W."/>
            <person name="Kirkpatrick H.A."/>
            <person name="Goeden M.A."/>
            <person name="Rose D.J."/>
            <person name="Mau B."/>
            <person name="Shao Y."/>
        </authorList>
    </citation>
    <scope>NUCLEOTIDE SEQUENCE [LARGE SCALE GENOMIC DNA]</scope>
    <source>
        <strain>K12 / MG1655 / ATCC 47076</strain>
    </source>
</reference>
<reference key="2">
    <citation type="journal article" date="2018" name="Proteomics">
        <title>Identifying new small proteins in Escherichia coli.</title>
        <authorList>
            <person name="VanOrsdel C.E."/>
            <person name="Kelly J.P."/>
            <person name="Burke B.N."/>
            <person name="Lein C.D."/>
            <person name="Oufiero C.E."/>
            <person name="Sanchez J.F."/>
            <person name="Wimmers L.E."/>
            <person name="Hearn D.J."/>
            <person name="Abuikhdair F.J."/>
            <person name="Barnhart K.R."/>
            <person name="Duley M.L."/>
            <person name="Ernst S.E.G."/>
            <person name="Kenerson B.A."/>
            <person name="Serafin A.J."/>
            <person name="Hemm M.R."/>
        </authorList>
    </citation>
    <scope>IDENTIFICATION</scope>
    <scope>INDUCTION</scope>
</reference>
<comment type="induction">
    <text evidence="1">Expressed at low levels in exponential and at slightly higher levels in stationary phase (at protein level).</text>
</comment>
<organism>
    <name type="scientific">Escherichia coli (strain K12)</name>
    <dbReference type="NCBI Taxonomy" id="83333"/>
    <lineage>
        <taxon>Bacteria</taxon>
        <taxon>Pseudomonadati</taxon>
        <taxon>Pseudomonadota</taxon>
        <taxon>Gammaproteobacteria</taxon>
        <taxon>Enterobacterales</taxon>
        <taxon>Enterobacteriaceae</taxon>
        <taxon>Escherichia</taxon>
    </lineage>
</organism>
<dbReference type="EMBL" id="U00096">
    <property type="protein sequence ID" value="AYC08194.1"/>
    <property type="molecule type" value="Genomic_DNA"/>
</dbReference>
<dbReference type="EnsemblBacteria" id="AYC08194">
    <property type="protein sequence ID" value="AYC08194"/>
    <property type="gene ID" value="b4738"/>
</dbReference>
<dbReference type="InParanoid" id="P0DPN8"/>
<dbReference type="BioCyc" id="EcoCyc:MONOMER0-4415"/>
<dbReference type="PRO" id="PR:P0DPN8"/>
<dbReference type="Proteomes" id="UP000000625">
    <property type="component" value="Chromosome"/>
</dbReference>
<feature type="chain" id="PRO_0000445166" description="Protein YmgK">
    <location>
        <begin position="1"/>
        <end position="14"/>
    </location>
</feature>
<sequence>MFSKLAQSSIKAMF</sequence>
<evidence type="ECO:0000269" key="1">
    <source>
    </source>
</evidence>
<evidence type="ECO:0000303" key="2">
    <source>
    </source>
</evidence>
<keyword id="KW-1185">Reference proteome</keyword>
<protein>
    <recommendedName>
        <fullName evidence="2">Protein YmgK</fullName>
    </recommendedName>
</protein>
<accession>P0DPN8</accession>
<accession>A0A385XJG4</accession>
<name>YMGK_ECOLI</name>
<proteinExistence type="evidence at protein level"/>
<gene>
    <name evidence="2" type="primary">ymgK</name>
    <name type="ordered locus">b4738</name>
</gene>